<dbReference type="EC" id="1.16.1.-"/>
<dbReference type="EMBL" id="FN393070">
    <property type="protein sequence ID" value="CAY79607.1"/>
    <property type="molecule type" value="Genomic_DNA"/>
</dbReference>
<dbReference type="HOGENOM" id="CLU_036508_0_0_1"/>
<dbReference type="OrthoDB" id="2468at4893"/>
<dbReference type="Proteomes" id="UP000000286">
    <property type="component" value="Chromosome VII, Scaffold EC1118_1G1"/>
</dbReference>
<dbReference type="GO" id="GO:0005886">
    <property type="term" value="C:plasma membrane"/>
    <property type="evidence" value="ECO:0007669"/>
    <property type="project" value="TreeGrafter"/>
</dbReference>
<dbReference type="GO" id="GO:0000293">
    <property type="term" value="F:ferric-chelate reductase activity"/>
    <property type="evidence" value="ECO:0007669"/>
    <property type="project" value="TreeGrafter"/>
</dbReference>
<dbReference type="GO" id="GO:0033215">
    <property type="term" value="P:reductive iron assimilation"/>
    <property type="evidence" value="ECO:0007669"/>
    <property type="project" value="TreeGrafter"/>
</dbReference>
<dbReference type="CDD" id="cd06186">
    <property type="entry name" value="NOX_Duox_like_FAD_NADP"/>
    <property type="match status" value="1"/>
</dbReference>
<dbReference type="Gene3D" id="3.40.50.80">
    <property type="entry name" value="Nucleotide-binding domain of ferredoxin-NADP reductase (FNR) module"/>
    <property type="match status" value="1"/>
</dbReference>
<dbReference type="InterPro" id="IPR013112">
    <property type="entry name" value="FAD-bd_8"/>
</dbReference>
<dbReference type="InterPro" id="IPR013130">
    <property type="entry name" value="Fe3_Rdtase_TM_dom"/>
</dbReference>
<dbReference type="InterPro" id="IPR013121">
    <property type="entry name" value="Fe_red_NAD-bd_6"/>
</dbReference>
<dbReference type="InterPro" id="IPR039261">
    <property type="entry name" value="FNR_nucleotide-bd"/>
</dbReference>
<dbReference type="InterPro" id="IPR050369">
    <property type="entry name" value="RBOH/FRE"/>
</dbReference>
<dbReference type="PANTHER" id="PTHR11972:SF198">
    <property type="entry name" value="METALLOREDUCTASE AIM14-RELATED"/>
    <property type="match status" value="1"/>
</dbReference>
<dbReference type="PANTHER" id="PTHR11972">
    <property type="entry name" value="NADPH OXIDASE"/>
    <property type="match status" value="1"/>
</dbReference>
<dbReference type="Pfam" id="PF08022">
    <property type="entry name" value="FAD_binding_8"/>
    <property type="match status" value="1"/>
</dbReference>
<dbReference type="Pfam" id="PF01794">
    <property type="entry name" value="Ferric_reduct"/>
    <property type="match status" value="1"/>
</dbReference>
<dbReference type="Pfam" id="PF08030">
    <property type="entry name" value="NAD_binding_6"/>
    <property type="match status" value="1"/>
</dbReference>
<dbReference type="SFLD" id="SFLDF00463">
    <property type="entry name" value="AIM14"/>
    <property type="match status" value="1"/>
</dbReference>
<dbReference type="SFLD" id="SFLDS00052">
    <property type="entry name" value="Ferric_Reductase_Domain"/>
    <property type="match status" value="1"/>
</dbReference>
<dbReference type="SFLD" id="SFLDG01168">
    <property type="entry name" value="Ferric_reductase_subgroup_(FRE"/>
    <property type="match status" value="1"/>
</dbReference>
<keyword id="KW-0249">Electron transport</keyword>
<keyword id="KW-0274">FAD</keyword>
<keyword id="KW-0285">Flavoprotein</keyword>
<keyword id="KW-0406">Ion transport</keyword>
<keyword id="KW-0472">Membrane</keyword>
<keyword id="KW-0521">NADP</keyword>
<keyword id="KW-0560">Oxidoreductase</keyword>
<keyword id="KW-0812">Transmembrane</keyword>
<keyword id="KW-1133">Transmembrane helix</keyword>
<keyword id="KW-0813">Transport</keyword>
<proteinExistence type="inferred from homology"/>
<reference key="1">
    <citation type="journal article" date="2009" name="Proc. Natl. Acad. Sci. U.S.A.">
        <title>Eukaryote-to-eukaryote gene transfer events revealed by the genome sequence of the wine yeast Saccharomyces cerevisiae EC1118.</title>
        <authorList>
            <person name="Novo M."/>
            <person name="Bigey F."/>
            <person name="Beyne E."/>
            <person name="Galeote V."/>
            <person name="Gavory F."/>
            <person name="Mallet S."/>
            <person name="Cambon B."/>
            <person name="Legras J.-L."/>
            <person name="Wincker P."/>
            <person name="Casaregola S."/>
            <person name="Dequin S."/>
        </authorList>
    </citation>
    <scope>NUCLEOTIDE SEQUENCE [LARGE SCALE GENOMIC DNA]</scope>
    <source>
        <strain>Lalvin EC1118 / Prise de mousse</strain>
    </source>
</reference>
<protein>
    <recommendedName>
        <fullName>Probable metalloreductase AIM14</fullName>
        <ecNumber>1.16.1.-</ecNumber>
    </recommendedName>
    <alternativeName>
        <fullName>Altered inheritance of mitochondria protein 14</fullName>
    </alternativeName>
</protein>
<comment type="function">
    <text evidence="1">Probable cell surface metalloreductase. May be involved in iron or copper homeostasis (By similarity).</text>
</comment>
<comment type="subunit">
    <text evidence="1">Interacts with ribosomes.</text>
</comment>
<comment type="subcellular location">
    <subcellularLocation>
        <location evidence="1">Membrane</location>
        <topology>Multi-pass membrane protein</topology>
    </subcellularLocation>
</comment>
<comment type="similarity">
    <text evidence="4">Belongs to the ferric reductase (FRE) family. AIM14 subfamily.</text>
</comment>
<organism>
    <name type="scientific">Saccharomyces cerevisiae (strain Lalvin EC1118 / Prise de mousse)</name>
    <name type="common">Baker's yeast</name>
    <dbReference type="NCBI Taxonomy" id="643680"/>
    <lineage>
        <taxon>Eukaryota</taxon>
        <taxon>Fungi</taxon>
        <taxon>Dikarya</taxon>
        <taxon>Ascomycota</taxon>
        <taxon>Saccharomycotina</taxon>
        <taxon>Saccharomycetes</taxon>
        <taxon>Saccharomycetales</taxon>
        <taxon>Saccharomycetaceae</taxon>
        <taxon>Saccharomyces</taxon>
    </lineage>
</organism>
<sequence>MKESPLITLVKRHSETHFANIKYGYYVLIISLVYLIGLALLRAFGRRTPSRSSSAFKNKIIYRLYDIDPAIHLGILFFAVLVPFYYHYSLTTQSTVYLKRLGRLSYALIPLNLFLTLRPNWFLRKNCTYTDFIPFHKWFSRIITVIGLLHGIFFIIKWAIDDNVSLKQKLILKTFNFVGFIISILVLFLLICSIGPMRRYNYRLFYIVHNLVNVAFILLTPIHSRPGVKFPFLLLNCTLLFIHIINRIVFAKSLMILNKNANYSKTNLVHVRLPRAILPDYFEPGSHIRISPYRRINPLYWLLPSHPYTIASLAEDNSIDLIIKETSTAEPGSQIESLRSNPKSFHLDQEKNYTLINSYPPSVPEECYSQGTNIAIICGGSGISFALPLFRHFFNKENVKYLKMIWLIKNYSEYELVLDYLKTNGLTFEKKLSNNKRISVFISGEYTAETRLDEITTNIDDENSEYEMGSFNNEDEDLSISNFNSENADSNDNTPETSHSPTKENGSLIEVKSKHSFTLSNELKSFNNESAQVNQNETWLFSCGPPSLLQLSKKYCNDERINFSVRLTDYEGKRKE</sequence>
<feature type="chain" id="PRO_0000408754" description="Probable metalloreductase AIM14">
    <location>
        <begin position="1"/>
        <end position="576"/>
    </location>
</feature>
<feature type="transmembrane region" description="Helical" evidence="2">
    <location>
        <begin position="21"/>
        <end position="41"/>
    </location>
</feature>
<feature type="transmembrane region" description="Helical" evidence="2">
    <location>
        <begin position="70"/>
        <end position="90"/>
    </location>
</feature>
<feature type="transmembrane region" description="Helical" evidence="2">
    <location>
        <begin position="101"/>
        <end position="118"/>
    </location>
</feature>
<feature type="transmembrane region" description="Helical" evidence="2">
    <location>
        <begin position="142"/>
        <end position="162"/>
    </location>
</feature>
<feature type="transmembrane region" description="Helical" evidence="2">
    <location>
        <begin position="177"/>
        <end position="197"/>
    </location>
</feature>
<feature type="transmembrane region" description="Helical" evidence="2">
    <location>
        <begin position="204"/>
        <end position="224"/>
    </location>
</feature>
<feature type="transmembrane region" description="Helical" evidence="2">
    <location>
        <begin position="230"/>
        <end position="250"/>
    </location>
</feature>
<feature type="domain" description="Ferric oxidoreductase">
    <location>
        <begin position="101"/>
        <end position="219"/>
    </location>
</feature>
<feature type="domain" description="FAD-binding FR-type">
    <location>
        <begin position="250"/>
        <end position="388"/>
    </location>
</feature>
<feature type="region of interest" description="Disordered" evidence="3">
    <location>
        <begin position="480"/>
        <end position="507"/>
    </location>
</feature>
<feature type="compositionally biased region" description="Polar residues" evidence="3">
    <location>
        <begin position="480"/>
        <end position="505"/>
    </location>
</feature>
<gene>
    <name type="primary">AIM14</name>
    <name type="ORF">EC1118_1G1_1200g</name>
</gene>
<evidence type="ECO:0000250" key="1"/>
<evidence type="ECO:0000255" key="2"/>
<evidence type="ECO:0000256" key="3">
    <source>
        <dbReference type="SAM" id="MobiDB-lite"/>
    </source>
</evidence>
<evidence type="ECO:0000305" key="4"/>
<name>AIM14_YEAS8</name>
<accession>C8Z891</accession>